<sequence length="248" mass="28121">MLFFNSILNDAPSSWALYFQDGASPSYLGVTHLNDYLMFYLTFIFIGVIYAICKAVIEYNYNSHPIAAKYTTHGSIVEFIWTLIPALILILVALPSFKLLYLLDEVQKPSMTVKAIGRQWFWTYELNDFVTNENEPVSFDSYMVPEEDLEEGSLRQLEVDNRLVLPIDTRIRLILTSGDVIHSWAVPSLGIKCDCIPGRLNQVSLSIDREGLFYGQCSELCGVLHSSMPIVVQGVSLEDFLAWLEENS</sequence>
<comment type="function">
    <text evidence="1">Component of the cytochrome c oxidase, the last enzyme in the mitochondrial electron transport chain which drives oxidative phosphorylation. The respiratory chain contains 3 multisubunit complexes succinate dehydrogenase (complex II, CII), ubiquinol-cytochrome c oxidoreductase (cytochrome b-c1 complex, complex III, CIII) and cytochrome c oxidase (complex IV, CIV), that cooperate to transfer electrons derived from NADH and succinate to molecular oxygen, creating an electrochemical gradient over the inner membrane that drives transmembrane transport and the ATP synthase. Cytochrome c oxidase is the component of the respiratory chain that catalyzes the reduction of oxygen to water. Electrons originating from reduced cytochrome c in the intermembrane space (IMS) are transferred via the dinuclear copper A center (CU(A)) of subunit 2 and heme A of subunit 1 to the active site in subunit 1, a binuclear center (BNC) formed by heme A3 and copper B (CU(B)). The BNC reduces molecular oxygen to 2 water molecules using 4 electrons from cytochrome c in the IMS and 4 protons from the mitochondrial matrix.</text>
</comment>
<comment type="catalytic activity">
    <reaction evidence="1">
        <text>4 Fe(II)-[cytochrome c] + O2 + 8 H(+)(in) = 4 Fe(III)-[cytochrome c] + 2 H2O + 4 H(+)(out)</text>
        <dbReference type="Rhea" id="RHEA:11436"/>
        <dbReference type="Rhea" id="RHEA-COMP:10350"/>
        <dbReference type="Rhea" id="RHEA-COMP:14399"/>
        <dbReference type="ChEBI" id="CHEBI:15377"/>
        <dbReference type="ChEBI" id="CHEBI:15378"/>
        <dbReference type="ChEBI" id="CHEBI:15379"/>
        <dbReference type="ChEBI" id="CHEBI:29033"/>
        <dbReference type="ChEBI" id="CHEBI:29034"/>
        <dbReference type="EC" id="7.1.1.9"/>
    </reaction>
    <physiologicalReaction direction="left-to-right" evidence="1">
        <dbReference type="Rhea" id="RHEA:11437"/>
    </physiologicalReaction>
</comment>
<comment type="cofactor">
    <cofactor evidence="1">
        <name>Cu cation</name>
        <dbReference type="ChEBI" id="CHEBI:23378"/>
    </cofactor>
    <text evidence="1">Binds a dinuclear copper A center per subunit.</text>
</comment>
<comment type="subunit">
    <text evidence="1">Component of the cytochrome c oxidase (complex IV, CIV), a multisubunit enzyme composed of a catalytic core of 3 subunits and several supernumerary subunits. The complex exists as a monomer or a dimer and forms supercomplexes (SCs) in the inner mitochondrial membrane with ubiquinol-cytochrome c oxidoreductase (cytochrome b-c1 complex, complex III, CIII).</text>
</comment>
<comment type="subcellular location">
    <subcellularLocation>
        <location evidence="1">Mitochondrion inner membrane</location>
        <topology evidence="1">Multi-pass membrane protein</topology>
    </subcellularLocation>
</comment>
<comment type="similarity">
    <text evidence="3">Belongs to the cytochrome c oxidase subunit 2 family.</text>
</comment>
<proteinExistence type="evidence at protein level"/>
<geneLocation type="mitochondrion"/>
<name>COX2_SCHPO</name>
<dbReference type="EC" id="7.1.1.9"/>
<dbReference type="EMBL" id="AJ251293">
    <property type="protein sequence ID" value="CAB61572.1"/>
    <property type="molecule type" value="Genomic_DNA"/>
</dbReference>
<dbReference type="EMBL" id="X54421">
    <property type="protein sequence ID" value="CAA38293.1"/>
    <property type="molecule type" value="Genomic_DNA"/>
</dbReference>
<dbReference type="RefSeq" id="NP_039508.1">
    <property type="nucleotide sequence ID" value="NC_001326.1"/>
</dbReference>
<dbReference type="PDB" id="8C8Q">
    <property type="method" value="EM"/>
    <property type="resolution" value="3.36 A"/>
    <property type="chains" value="B=1-248"/>
</dbReference>
<dbReference type="PDB" id="8Q1B">
    <property type="method" value="EM"/>
    <property type="resolution" value="3.40 A"/>
    <property type="chains" value="b=1-248"/>
</dbReference>
<dbReference type="PDBsum" id="8C8Q"/>
<dbReference type="PDBsum" id="8Q1B"/>
<dbReference type="EMDB" id="EMD-16491"/>
<dbReference type="EMDB" id="EMD-18062"/>
<dbReference type="SMR" id="P21534"/>
<dbReference type="ComplexPortal" id="CPX-9641">
    <property type="entry name" value="Mitochondrial respiratory chain complex IV"/>
</dbReference>
<dbReference type="FunCoup" id="P21534">
    <property type="interactions" value="203"/>
</dbReference>
<dbReference type="STRING" id="284812.P21534"/>
<dbReference type="iPTMnet" id="P21534"/>
<dbReference type="PaxDb" id="4896-SPMIT.11.1"/>
<dbReference type="PomBase" id="SPMIT.11">
    <property type="gene designation" value="cox2"/>
</dbReference>
<dbReference type="eggNOG" id="KOG4767">
    <property type="taxonomic scope" value="Eukaryota"/>
</dbReference>
<dbReference type="HOGENOM" id="CLU_036876_2_3_1"/>
<dbReference type="InParanoid" id="P21534"/>
<dbReference type="PhylomeDB" id="P21534"/>
<dbReference type="PRO" id="PR:P21534"/>
<dbReference type="Proteomes" id="UP000002485">
    <property type="component" value="Mitochondrion"/>
</dbReference>
<dbReference type="GO" id="GO:0005743">
    <property type="term" value="C:mitochondrial inner membrane"/>
    <property type="evidence" value="ECO:0000314"/>
    <property type="project" value="PomBase"/>
</dbReference>
<dbReference type="GO" id="GO:0031966">
    <property type="term" value="C:mitochondrial membrane"/>
    <property type="evidence" value="ECO:0000314"/>
    <property type="project" value="PomBase"/>
</dbReference>
<dbReference type="GO" id="GO:0045277">
    <property type="term" value="C:respiratory chain complex IV"/>
    <property type="evidence" value="ECO:0000314"/>
    <property type="project" value="PomBase"/>
</dbReference>
<dbReference type="GO" id="GO:0005507">
    <property type="term" value="F:copper ion binding"/>
    <property type="evidence" value="ECO:0007669"/>
    <property type="project" value="InterPro"/>
</dbReference>
<dbReference type="GO" id="GO:0004129">
    <property type="term" value="F:cytochrome-c oxidase activity"/>
    <property type="evidence" value="ECO:0000315"/>
    <property type="project" value="PomBase"/>
</dbReference>
<dbReference type="GO" id="GO:0042773">
    <property type="term" value="P:ATP synthesis coupled electron transport"/>
    <property type="evidence" value="ECO:0000318"/>
    <property type="project" value="GO_Central"/>
</dbReference>
<dbReference type="GO" id="GO:0006123">
    <property type="term" value="P:mitochondrial electron transport, cytochrome c to oxygen"/>
    <property type="evidence" value="ECO:0000315"/>
    <property type="project" value="PomBase"/>
</dbReference>
<dbReference type="CDD" id="cd13912">
    <property type="entry name" value="CcO_II_C"/>
    <property type="match status" value="1"/>
</dbReference>
<dbReference type="FunFam" id="1.10.287.90:FF:000004">
    <property type="entry name" value="Cytochrome c oxidase subunit 2"/>
    <property type="match status" value="1"/>
</dbReference>
<dbReference type="FunFam" id="2.60.40.420:FF:000001">
    <property type="entry name" value="Cytochrome c oxidase subunit 2"/>
    <property type="match status" value="1"/>
</dbReference>
<dbReference type="Gene3D" id="1.10.287.90">
    <property type="match status" value="1"/>
</dbReference>
<dbReference type="Gene3D" id="2.60.40.420">
    <property type="entry name" value="Cupredoxins - blue copper proteins"/>
    <property type="match status" value="1"/>
</dbReference>
<dbReference type="InterPro" id="IPR045187">
    <property type="entry name" value="CcO_II"/>
</dbReference>
<dbReference type="InterPro" id="IPR002429">
    <property type="entry name" value="CcO_II-like_C"/>
</dbReference>
<dbReference type="InterPro" id="IPR034210">
    <property type="entry name" value="CcO_II_C"/>
</dbReference>
<dbReference type="InterPro" id="IPR001505">
    <property type="entry name" value="Copper_CuA"/>
</dbReference>
<dbReference type="InterPro" id="IPR008972">
    <property type="entry name" value="Cupredoxin"/>
</dbReference>
<dbReference type="InterPro" id="IPR014222">
    <property type="entry name" value="Cyt_c_oxidase_su2"/>
</dbReference>
<dbReference type="InterPro" id="IPR011759">
    <property type="entry name" value="Cyt_c_oxidase_su2_TM_dom"/>
</dbReference>
<dbReference type="InterPro" id="IPR036257">
    <property type="entry name" value="Cyt_c_oxidase_su2_TM_sf"/>
</dbReference>
<dbReference type="NCBIfam" id="TIGR02866">
    <property type="entry name" value="CoxB"/>
    <property type="match status" value="1"/>
</dbReference>
<dbReference type="PANTHER" id="PTHR22888:SF9">
    <property type="entry name" value="CYTOCHROME C OXIDASE SUBUNIT 2"/>
    <property type="match status" value="1"/>
</dbReference>
<dbReference type="PANTHER" id="PTHR22888">
    <property type="entry name" value="CYTOCHROME C OXIDASE, SUBUNIT II"/>
    <property type="match status" value="1"/>
</dbReference>
<dbReference type="Pfam" id="PF00116">
    <property type="entry name" value="COX2"/>
    <property type="match status" value="1"/>
</dbReference>
<dbReference type="Pfam" id="PF02790">
    <property type="entry name" value="COX2_TM"/>
    <property type="match status" value="1"/>
</dbReference>
<dbReference type="PRINTS" id="PR01166">
    <property type="entry name" value="CYCOXIDASEII"/>
</dbReference>
<dbReference type="SUPFAM" id="SSF49503">
    <property type="entry name" value="Cupredoxins"/>
    <property type="match status" value="1"/>
</dbReference>
<dbReference type="SUPFAM" id="SSF81464">
    <property type="entry name" value="Cytochrome c oxidase subunit II-like, transmembrane region"/>
    <property type="match status" value="1"/>
</dbReference>
<dbReference type="PROSITE" id="PS00078">
    <property type="entry name" value="COX2"/>
    <property type="match status" value="1"/>
</dbReference>
<dbReference type="PROSITE" id="PS50857">
    <property type="entry name" value="COX2_CUA"/>
    <property type="match status" value="1"/>
</dbReference>
<dbReference type="PROSITE" id="PS50999">
    <property type="entry name" value="COX2_TM"/>
    <property type="match status" value="1"/>
</dbReference>
<accession>P21534</accession>
<accession>Q9T653</accession>
<organism>
    <name type="scientific">Schizosaccharomyces pombe (strain 972 / ATCC 24843)</name>
    <name type="common">Fission yeast</name>
    <dbReference type="NCBI Taxonomy" id="284812"/>
    <lineage>
        <taxon>Eukaryota</taxon>
        <taxon>Fungi</taxon>
        <taxon>Dikarya</taxon>
        <taxon>Ascomycota</taxon>
        <taxon>Taphrinomycotina</taxon>
        <taxon>Schizosaccharomycetes</taxon>
        <taxon>Schizosaccharomycetales</taxon>
        <taxon>Schizosaccharomycetaceae</taxon>
        <taxon>Schizosaccharomyces</taxon>
    </lineage>
</organism>
<evidence type="ECO:0000250" key="1">
    <source>
        <dbReference type="UniProtKB" id="P00410"/>
    </source>
</evidence>
<evidence type="ECO:0000255" key="2"/>
<evidence type="ECO:0000305" key="3"/>
<evidence type="ECO:0007829" key="4">
    <source>
        <dbReference type="PDB" id="8C8Q"/>
    </source>
</evidence>
<gene>
    <name type="primary">cox2</name>
    <name type="ORF">SPMIT.11</name>
</gene>
<reference key="1">
    <citation type="journal article" date="1998" name="Gene">
        <title>Mosaic structure of the cox2 gene in the petite negative yeast Schizosaccharomyces pombe: a group II intron is inserted at the same location as the otherwise unrelated group II introns in the mitochondria of higher plants.</title>
        <authorList>
            <person name="Schaefer B."/>
            <person name="Kaulich K."/>
            <person name="Wolf K."/>
        </authorList>
    </citation>
    <scope>NUCLEOTIDE SEQUENCE [GENOMIC DNA]</scope>
    <source>
        <strain>EF2</strain>
    </source>
</reference>
<reference key="2">
    <citation type="book" date="1993" name="Genetic Maps (6th edition)">
        <title>The mitochondrial genome of Schizosaccharomyces pombe.</title>
        <editorList>
            <person name="O'Brien S.J."/>
        </editorList>
        <authorList>
            <person name="Lang B.F."/>
        </authorList>
    </citation>
    <scope>NUCLEOTIDE SEQUENCE [LARGE SCALE GENOMIC DNA]</scope>
    <source>
        <strain>AD7-50</strain>
    </source>
</reference>
<protein>
    <recommendedName>
        <fullName>Cytochrome c oxidase subunit 2</fullName>
        <ecNumber>7.1.1.9</ecNumber>
    </recommendedName>
    <alternativeName>
        <fullName>Cytochrome c oxidase polypeptide II</fullName>
    </alternativeName>
</protein>
<feature type="chain" id="PRO_0000183686" description="Cytochrome c oxidase subunit 2">
    <location>
        <begin position="1"/>
        <end position="248"/>
    </location>
</feature>
<feature type="topological domain" description="Mitochondrial intermembrane" evidence="2">
    <location>
        <begin position="1"/>
        <end position="36"/>
    </location>
</feature>
<feature type="transmembrane region" description="Helical" evidence="2">
    <location>
        <begin position="37"/>
        <end position="57"/>
    </location>
</feature>
<feature type="topological domain" description="Mitochondrial matrix" evidence="2">
    <location>
        <begin position="58"/>
        <end position="75"/>
    </location>
</feature>
<feature type="transmembrane region" description="Helical" evidence="2">
    <location>
        <begin position="76"/>
        <end position="100"/>
    </location>
</feature>
<feature type="topological domain" description="Mitochondrial intermembrane" evidence="2">
    <location>
        <begin position="101"/>
        <end position="248"/>
    </location>
</feature>
<feature type="binding site" evidence="1">
    <location>
        <position position="182"/>
    </location>
    <ligand>
        <name>Cu cation</name>
        <dbReference type="ChEBI" id="CHEBI:23378"/>
        <label>A1</label>
    </ligand>
</feature>
<feature type="binding site" evidence="1">
    <location>
        <position position="217"/>
    </location>
    <ligand>
        <name>Cu cation</name>
        <dbReference type="ChEBI" id="CHEBI:23378"/>
        <label>A1</label>
    </ligand>
</feature>
<feature type="binding site" evidence="1">
    <location>
        <position position="217"/>
    </location>
    <ligand>
        <name>Cu cation</name>
        <dbReference type="ChEBI" id="CHEBI:23378"/>
        <label>A2</label>
    </ligand>
</feature>
<feature type="binding site" evidence="1">
    <location>
        <position position="219"/>
    </location>
    <ligand>
        <name>Cu cation</name>
        <dbReference type="ChEBI" id="CHEBI:23378"/>
        <label>A2</label>
    </ligand>
</feature>
<feature type="binding site" evidence="1">
    <location>
        <position position="219"/>
    </location>
    <ligand>
        <name>Mg(2+)</name>
        <dbReference type="ChEBI" id="CHEBI:18420"/>
        <note>ligand shared with subunit 1</note>
    </ligand>
</feature>
<feature type="binding site" evidence="1">
    <location>
        <position position="221"/>
    </location>
    <ligand>
        <name>Cu cation</name>
        <dbReference type="ChEBI" id="CHEBI:23378"/>
        <label>A1</label>
    </ligand>
</feature>
<feature type="binding site" evidence="1">
    <location>
        <position position="221"/>
    </location>
    <ligand>
        <name>Cu cation</name>
        <dbReference type="ChEBI" id="CHEBI:23378"/>
        <label>A2</label>
    </ligand>
</feature>
<feature type="binding site" evidence="1">
    <location>
        <position position="225"/>
    </location>
    <ligand>
        <name>Cu cation</name>
        <dbReference type="ChEBI" id="CHEBI:23378"/>
        <label>A2</label>
    </ligand>
</feature>
<feature type="binding site" evidence="1">
    <location>
        <position position="228"/>
    </location>
    <ligand>
        <name>Cu cation</name>
        <dbReference type="ChEBI" id="CHEBI:23378"/>
        <label>A1</label>
    </ligand>
</feature>
<feature type="sequence conflict" description="In Ref. 1; CAA38293." evidence="3" ref="1">
    <original>T</original>
    <variation>S</variation>
    <location>
        <position position="123"/>
    </location>
</feature>
<feature type="sequence conflict" description="In Ref. 1; CAA38293." evidence="3" ref="1">
    <original>G</original>
    <variation>S</variation>
    <location>
        <position position="198"/>
    </location>
</feature>
<feature type="helix" evidence="4">
    <location>
        <begin position="25"/>
        <end position="57"/>
    </location>
</feature>
<feature type="turn" evidence="4">
    <location>
        <begin position="61"/>
        <end position="63"/>
    </location>
</feature>
<feature type="helix" evidence="4">
    <location>
        <begin position="77"/>
        <end position="104"/>
    </location>
</feature>
<feature type="strand" evidence="4">
    <location>
        <begin position="112"/>
        <end position="117"/>
    </location>
</feature>
<feature type="strand" evidence="4">
    <location>
        <begin position="119"/>
        <end position="126"/>
    </location>
</feature>
<feature type="strand" evidence="4">
    <location>
        <begin position="137"/>
        <end position="141"/>
    </location>
</feature>
<feature type="strand" evidence="4">
    <location>
        <begin position="159"/>
        <end position="161"/>
    </location>
</feature>
<feature type="strand" evidence="4">
    <location>
        <begin position="163"/>
        <end position="169"/>
    </location>
</feature>
<feature type="strand" evidence="4">
    <location>
        <begin position="171"/>
        <end position="175"/>
    </location>
</feature>
<feature type="strand" evidence="4">
    <location>
        <begin position="177"/>
        <end position="180"/>
    </location>
</feature>
<feature type="strand" evidence="4">
    <location>
        <begin position="182"/>
        <end position="186"/>
    </location>
</feature>
<feature type="turn" evidence="4">
    <location>
        <begin position="187"/>
        <end position="190"/>
    </location>
</feature>
<feature type="strand" evidence="4">
    <location>
        <begin position="191"/>
        <end position="195"/>
    </location>
</feature>
<feature type="strand" evidence="4">
    <location>
        <begin position="201"/>
        <end position="205"/>
    </location>
</feature>
<feature type="strand" evidence="4">
    <location>
        <begin position="209"/>
        <end position="216"/>
    </location>
</feature>
<feature type="strand" evidence="4">
    <location>
        <begin position="229"/>
        <end position="235"/>
    </location>
</feature>
<feature type="helix" evidence="4">
    <location>
        <begin position="237"/>
        <end position="246"/>
    </location>
</feature>
<keyword id="KW-0002">3D-structure</keyword>
<keyword id="KW-0186">Copper</keyword>
<keyword id="KW-0249">Electron transport</keyword>
<keyword id="KW-0460">Magnesium</keyword>
<keyword id="KW-0472">Membrane</keyword>
<keyword id="KW-0479">Metal-binding</keyword>
<keyword id="KW-0496">Mitochondrion</keyword>
<keyword id="KW-0999">Mitochondrion inner membrane</keyword>
<keyword id="KW-1185">Reference proteome</keyword>
<keyword id="KW-0679">Respiratory chain</keyword>
<keyword id="KW-1278">Translocase</keyword>
<keyword id="KW-0812">Transmembrane</keyword>
<keyword id="KW-1133">Transmembrane helix</keyword>
<keyword id="KW-0813">Transport</keyword>